<keyword id="KW-0025">Alternative splicing</keyword>
<keyword id="KW-1003">Cell membrane</keyword>
<keyword id="KW-0256">Endoplasmic reticulum</keyword>
<keyword id="KW-0446">Lipid-binding</keyword>
<keyword id="KW-0472">Membrane</keyword>
<keyword id="KW-0597">Phosphoprotein</keyword>
<keyword id="KW-1185">Reference proteome</keyword>
<keyword id="KW-0812">Transmembrane</keyword>
<keyword id="KW-1133">Transmembrane helix</keyword>
<gene>
    <name evidence="7" type="primary">Gramd2a</name>
    <name type="synonym">Gramd2</name>
</gene>
<comment type="function">
    <text evidence="1">Participates in the organization ofendoplasmic reticulum-plasma membrane contact sites (EPCS) with pleiotropic functions including STIM1 recruitment and calcium homeostasis. Constitutive tether that co-localize with ESYT2/3 tethers at endoplasmic reticulum-plasma membrane contact sites in a phosphatidylinositol lipid-dependent manner. Pre-marks the subset of phosphtidylinositol 4,5-biphosphate (PI(4,5)P2)-enriched EPCS destined for the store operated calcium entry pathway (SOCE).</text>
</comment>
<comment type="subcellular location">
    <subcellularLocation>
        <location evidence="1">Endoplasmic reticulum membrane</location>
        <topology evidence="1">Single-pass membrane protein</topology>
    </subcellularLocation>
    <subcellularLocation>
        <location evidence="1">Cell membrane</location>
        <topology evidence="1">Peripheral membrane protein</topology>
    </subcellularLocation>
    <text evidence="1">Localizes to endoplasmic reticulum-plasma membrane contact sites (EPCS). Anchored at the ER, PM binding is mediated via GRAM domain and phosphatidylinositol lipid interaction. Localizes to distinct EPCS than GRAMD1A.</text>
</comment>
<comment type="alternative products">
    <event type="alternative splicing"/>
    <isoform>
        <id>Q3V3G7-1</id>
        <name>1</name>
        <sequence type="displayed"/>
    </isoform>
    <isoform>
        <id>Q3V3G7-2</id>
        <name>2</name>
        <sequence type="described" ref="VSP_025478"/>
    </isoform>
</comment>
<comment type="domain">
    <text evidence="1">GRAM domain is required for specific location to endoplasmic reticulum-plasma membrane contact sites (EPCS). Mediates interaction to phosphatidylinositol lipids and binding to plasma membrane.</text>
</comment>
<comment type="PTM">
    <text>Phosphorylated.</text>
</comment>
<sequence length="320" mass="36441">MQMKMMFFCLSDWQSNQQMHGKMAPLKSHVPCTEKPGKVQEPPDDGSLHWSEGSKGEDIKKYSREGTLRSKYNQQYHKLFKDIPLEEVVLKVCSCALQRDLLLHGRLYISPNWLCFHASLFGKDIKVVIPVVSVQLIKKHKMARLLPNGLAITTNTSQKYVFVSLLSRDSVYDMLRRVCTHLQPSSKKSLSIRKFPEEAECESPEVLIPEMKWRKACSAPASLSLPDSISCISQIPTDSTDSCFPSRKPPGSEAVCEKDALEEEPSTDQELRLWDSRLLKVIFVMICFLVLSSSYLAFRISRLEQQLCSLSWGSPLPRDR</sequence>
<reference key="1">
    <citation type="journal article" date="2005" name="Science">
        <title>The transcriptional landscape of the mammalian genome.</title>
        <authorList>
            <person name="Carninci P."/>
            <person name="Kasukawa T."/>
            <person name="Katayama S."/>
            <person name="Gough J."/>
            <person name="Frith M.C."/>
            <person name="Maeda N."/>
            <person name="Oyama R."/>
            <person name="Ravasi T."/>
            <person name="Lenhard B."/>
            <person name="Wells C."/>
            <person name="Kodzius R."/>
            <person name="Shimokawa K."/>
            <person name="Bajic V.B."/>
            <person name="Brenner S.E."/>
            <person name="Batalov S."/>
            <person name="Forrest A.R."/>
            <person name="Zavolan M."/>
            <person name="Davis M.J."/>
            <person name="Wilming L.G."/>
            <person name="Aidinis V."/>
            <person name="Allen J.E."/>
            <person name="Ambesi-Impiombato A."/>
            <person name="Apweiler R."/>
            <person name="Aturaliya R.N."/>
            <person name="Bailey T.L."/>
            <person name="Bansal M."/>
            <person name="Baxter L."/>
            <person name="Beisel K.W."/>
            <person name="Bersano T."/>
            <person name="Bono H."/>
            <person name="Chalk A.M."/>
            <person name="Chiu K.P."/>
            <person name="Choudhary V."/>
            <person name="Christoffels A."/>
            <person name="Clutterbuck D.R."/>
            <person name="Crowe M.L."/>
            <person name="Dalla E."/>
            <person name="Dalrymple B.P."/>
            <person name="de Bono B."/>
            <person name="Della Gatta G."/>
            <person name="di Bernardo D."/>
            <person name="Down T."/>
            <person name="Engstrom P."/>
            <person name="Fagiolini M."/>
            <person name="Faulkner G."/>
            <person name="Fletcher C.F."/>
            <person name="Fukushima T."/>
            <person name="Furuno M."/>
            <person name="Futaki S."/>
            <person name="Gariboldi M."/>
            <person name="Georgii-Hemming P."/>
            <person name="Gingeras T.R."/>
            <person name="Gojobori T."/>
            <person name="Green R.E."/>
            <person name="Gustincich S."/>
            <person name="Harbers M."/>
            <person name="Hayashi Y."/>
            <person name="Hensch T.K."/>
            <person name="Hirokawa N."/>
            <person name="Hill D."/>
            <person name="Huminiecki L."/>
            <person name="Iacono M."/>
            <person name="Ikeo K."/>
            <person name="Iwama A."/>
            <person name="Ishikawa T."/>
            <person name="Jakt M."/>
            <person name="Kanapin A."/>
            <person name="Katoh M."/>
            <person name="Kawasawa Y."/>
            <person name="Kelso J."/>
            <person name="Kitamura H."/>
            <person name="Kitano H."/>
            <person name="Kollias G."/>
            <person name="Krishnan S.P."/>
            <person name="Kruger A."/>
            <person name="Kummerfeld S.K."/>
            <person name="Kurochkin I.V."/>
            <person name="Lareau L.F."/>
            <person name="Lazarevic D."/>
            <person name="Lipovich L."/>
            <person name="Liu J."/>
            <person name="Liuni S."/>
            <person name="McWilliam S."/>
            <person name="Madan Babu M."/>
            <person name="Madera M."/>
            <person name="Marchionni L."/>
            <person name="Matsuda H."/>
            <person name="Matsuzawa S."/>
            <person name="Miki H."/>
            <person name="Mignone F."/>
            <person name="Miyake S."/>
            <person name="Morris K."/>
            <person name="Mottagui-Tabar S."/>
            <person name="Mulder N."/>
            <person name="Nakano N."/>
            <person name="Nakauchi H."/>
            <person name="Ng P."/>
            <person name="Nilsson R."/>
            <person name="Nishiguchi S."/>
            <person name="Nishikawa S."/>
            <person name="Nori F."/>
            <person name="Ohara O."/>
            <person name="Okazaki Y."/>
            <person name="Orlando V."/>
            <person name="Pang K.C."/>
            <person name="Pavan W.J."/>
            <person name="Pavesi G."/>
            <person name="Pesole G."/>
            <person name="Petrovsky N."/>
            <person name="Piazza S."/>
            <person name="Reed J."/>
            <person name="Reid J.F."/>
            <person name="Ring B.Z."/>
            <person name="Ringwald M."/>
            <person name="Rost B."/>
            <person name="Ruan Y."/>
            <person name="Salzberg S.L."/>
            <person name="Sandelin A."/>
            <person name="Schneider C."/>
            <person name="Schoenbach C."/>
            <person name="Sekiguchi K."/>
            <person name="Semple C.A."/>
            <person name="Seno S."/>
            <person name="Sessa L."/>
            <person name="Sheng Y."/>
            <person name="Shibata Y."/>
            <person name="Shimada H."/>
            <person name="Shimada K."/>
            <person name="Silva D."/>
            <person name="Sinclair B."/>
            <person name="Sperling S."/>
            <person name="Stupka E."/>
            <person name="Sugiura K."/>
            <person name="Sultana R."/>
            <person name="Takenaka Y."/>
            <person name="Taki K."/>
            <person name="Tammoja K."/>
            <person name="Tan S.L."/>
            <person name="Tang S."/>
            <person name="Taylor M.S."/>
            <person name="Tegner J."/>
            <person name="Teichmann S.A."/>
            <person name="Ueda H.R."/>
            <person name="van Nimwegen E."/>
            <person name="Verardo R."/>
            <person name="Wei C.L."/>
            <person name="Yagi K."/>
            <person name="Yamanishi H."/>
            <person name="Zabarovsky E."/>
            <person name="Zhu S."/>
            <person name="Zimmer A."/>
            <person name="Hide W."/>
            <person name="Bult C."/>
            <person name="Grimmond S.M."/>
            <person name="Teasdale R.D."/>
            <person name="Liu E.T."/>
            <person name="Brusic V."/>
            <person name="Quackenbush J."/>
            <person name="Wahlestedt C."/>
            <person name="Mattick J.S."/>
            <person name="Hume D.A."/>
            <person name="Kai C."/>
            <person name="Sasaki D."/>
            <person name="Tomaru Y."/>
            <person name="Fukuda S."/>
            <person name="Kanamori-Katayama M."/>
            <person name="Suzuki M."/>
            <person name="Aoki J."/>
            <person name="Arakawa T."/>
            <person name="Iida J."/>
            <person name="Imamura K."/>
            <person name="Itoh M."/>
            <person name="Kato T."/>
            <person name="Kawaji H."/>
            <person name="Kawagashira N."/>
            <person name="Kawashima T."/>
            <person name="Kojima M."/>
            <person name="Kondo S."/>
            <person name="Konno H."/>
            <person name="Nakano K."/>
            <person name="Ninomiya N."/>
            <person name="Nishio T."/>
            <person name="Okada M."/>
            <person name="Plessy C."/>
            <person name="Shibata K."/>
            <person name="Shiraki T."/>
            <person name="Suzuki S."/>
            <person name="Tagami M."/>
            <person name="Waki K."/>
            <person name="Watahiki A."/>
            <person name="Okamura-Oho Y."/>
            <person name="Suzuki H."/>
            <person name="Kawai J."/>
            <person name="Hayashizaki Y."/>
        </authorList>
    </citation>
    <scope>NUCLEOTIDE SEQUENCE [LARGE SCALE MRNA] (ISOFORMS 1 AND 2)</scope>
    <source>
        <strain>C57BL/6J</strain>
        <tissue>Thymus</tissue>
    </source>
</reference>
<reference key="2">
    <citation type="journal article" date="2004" name="Genome Res.">
        <title>The status, quality, and expansion of the NIH full-length cDNA project: the Mammalian Gene Collection (MGC).</title>
        <authorList>
            <consortium name="The MGC Project Team"/>
        </authorList>
    </citation>
    <scope>NUCLEOTIDE SEQUENCE [LARGE SCALE MRNA] (ISOFORM 2)</scope>
    <source>
        <tissue>Brain</tissue>
    </source>
</reference>
<accession>Q3V3G7</accession>
<accession>B2RSP5</accession>
<accession>Q3V3E4</accession>
<proteinExistence type="evidence at transcript level"/>
<feature type="chain" id="PRO_0000287455" description="GRAM domain-containing protein 2A">
    <location>
        <begin position="1"/>
        <end position="320"/>
    </location>
</feature>
<feature type="transmembrane region" description="Helical" evidence="2">
    <location>
        <begin position="278"/>
        <end position="298"/>
    </location>
</feature>
<feature type="domain" description="GRAM">
    <location>
        <begin position="74"/>
        <end position="141"/>
    </location>
</feature>
<feature type="region of interest" description="Disordered" evidence="3">
    <location>
        <begin position="33"/>
        <end position="56"/>
    </location>
</feature>
<feature type="splice variant" id="VSP_025478" description="In isoform 2." evidence="4 5">
    <original>MQMKMMFFCLSDWQ</original>
    <variation>MDTFPS</variation>
    <location>
        <begin position="1"/>
        <end position="14"/>
    </location>
</feature>
<evidence type="ECO:0000250" key="1">
    <source>
        <dbReference type="UniProtKB" id="Q8IUY3"/>
    </source>
</evidence>
<evidence type="ECO:0000255" key="2"/>
<evidence type="ECO:0000256" key="3">
    <source>
        <dbReference type="SAM" id="MobiDB-lite"/>
    </source>
</evidence>
<evidence type="ECO:0000303" key="4">
    <source>
    </source>
</evidence>
<evidence type="ECO:0000303" key="5">
    <source>
    </source>
</evidence>
<evidence type="ECO:0000305" key="6"/>
<evidence type="ECO:0000312" key="7">
    <source>
        <dbReference type="MGI" id="MGI:3528937"/>
    </source>
</evidence>
<name>GRM2A_MOUSE</name>
<protein>
    <recommendedName>
        <fullName evidence="6">GRAM domain-containing protein 2A</fullName>
    </recommendedName>
    <alternativeName>
        <fullName>GRAM domain-containing protein 2</fullName>
    </alternativeName>
</protein>
<dbReference type="EMBL" id="AK040545">
    <property type="protein sequence ID" value="BAE20581.1"/>
    <property type="molecule type" value="mRNA"/>
</dbReference>
<dbReference type="EMBL" id="AK041631">
    <property type="protein sequence ID" value="BAE20597.1"/>
    <property type="molecule type" value="mRNA"/>
</dbReference>
<dbReference type="EMBL" id="BC138948">
    <property type="protein sequence ID" value="AAI38949.1"/>
    <property type="molecule type" value="mRNA"/>
</dbReference>
<dbReference type="EMBL" id="BC138949">
    <property type="protein sequence ID" value="AAI38950.1"/>
    <property type="molecule type" value="mRNA"/>
</dbReference>
<dbReference type="CCDS" id="CCDS52818.1">
    <molecule id="Q3V3G7-2"/>
</dbReference>
<dbReference type="CCDS" id="CCDS90587.1">
    <molecule id="Q3V3G7-1"/>
</dbReference>
<dbReference type="RefSeq" id="NP_001028670.1">
    <molecule id="Q3V3G7-2"/>
    <property type="nucleotide sequence ID" value="NM_001033498.2"/>
</dbReference>
<dbReference type="RefSeq" id="NP_001344615.1">
    <molecule id="Q3V3G7-1"/>
    <property type="nucleotide sequence ID" value="NM_001357686.1"/>
</dbReference>
<dbReference type="RefSeq" id="XP_006511336.1">
    <property type="nucleotide sequence ID" value="XM_006511273.3"/>
</dbReference>
<dbReference type="SMR" id="Q3V3G7"/>
<dbReference type="FunCoup" id="Q3V3G7">
    <property type="interactions" value="4"/>
</dbReference>
<dbReference type="STRING" id="10090.ENSMUSP00000096258"/>
<dbReference type="iPTMnet" id="Q3V3G7"/>
<dbReference type="PhosphoSitePlus" id="Q3V3G7"/>
<dbReference type="PaxDb" id="10090-ENSMUSP00000096258"/>
<dbReference type="ProteomicsDB" id="271332">
    <molecule id="Q3V3G7-1"/>
</dbReference>
<dbReference type="ProteomicsDB" id="271333">
    <molecule id="Q3V3G7-2"/>
</dbReference>
<dbReference type="Antibodypedia" id="26585">
    <property type="antibodies" value="65 antibodies from 18 providers"/>
</dbReference>
<dbReference type="Ensembl" id="ENSMUST00000098661.10">
    <molecule id="Q3V3G7-2"/>
    <property type="protein sequence ID" value="ENSMUSP00000096258.4"/>
    <property type="gene ID" value="ENSMUSG00000074259.11"/>
</dbReference>
<dbReference type="Ensembl" id="ENSMUST00000128944.8">
    <molecule id="Q3V3G7-1"/>
    <property type="protein sequence ID" value="ENSMUSP00000116879.2"/>
    <property type="gene ID" value="ENSMUSG00000074259.11"/>
</dbReference>
<dbReference type="GeneID" id="546134"/>
<dbReference type="KEGG" id="mmu:546134"/>
<dbReference type="UCSC" id="uc009pyk.1">
    <molecule id="Q3V3G7-1"/>
    <property type="organism name" value="mouse"/>
</dbReference>
<dbReference type="UCSC" id="uc009pyl.1">
    <molecule id="Q3V3G7-2"/>
    <property type="organism name" value="mouse"/>
</dbReference>
<dbReference type="AGR" id="MGI:3528937"/>
<dbReference type="CTD" id="196996"/>
<dbReference type="MGI" id="MGI:3528937">
    <property type="gene designation" value="Gramd2a"/>
</dbReference>
<dbReference type="VEuPathDB" id="HostDB:ENSMUSG00000074259"/>
<dbReference type="eggNOG" id="KOG1032">
    <property type="taxonomic scope" value="Eukaryota"/>
</dbReference>
<dbReference type="GeneTree" id="ENSGT00940000159572"/>
<dbReference type="HOGENOM" id="CLU_050698_0_1_1"/>
<dbReference type="InParanoid" id="Q3V3G7"/>
<dbReference type="OMA" id="CIPRASM"/>
<dbReference type="OrthoDB" id="2162691at2759"/>
<dbReference type="PhylomeDB" id="Q3V3G7"/>
<dbReference type="TreeFam" id="TF327695"/>
<dbReference type="BioGRID-ORCS" id="546134">
    <property type="hits" value="0 hits in 78 CRISPR screens"/>
</dbReference>
<dbReference type="ChiTaRS" id="Gramd2">
    <property type="organism name" value="mouse"/>
</dbReference>
<dbReference type="PRO" id="PR:Q3V3G7"/>
<dbReference type="Proteomes" id="UP000000589">
    <property type="component" value="Chromosome 9"/>
</dbReference>
<dbReference type="RNAct" id="Q3V3G7">
    <property type="molecule type" value="protein"/>
</dbReference>
<dbReference type="Bgee" id="ENSMUSG00000074259">
    <property type="expression patterns" value="Expressed in layer of retina and 60 other cell types or tissues"/>
</dbReference>
<dbReference type="ExpressionAtlas" id="Q3V3G7">
    <property type="expression patterns" value="baseline and differential"/>
</dbReference>
<dbReference type="GO" id="GO:0005789">
    <property type="term" value="C:endoplasmic reticulum membrane"/>
    <property type="evidence" value="ECO:0000250"/>
    <property type="project" value="UniProtKB"/>
</dbReference>
<dbReference type="GO" id="GO:0044232">
    <property type="term" value="C:organelle membrane contact site"/>
    <property type="evidence" value="ECO:0000250"/>
    <property type="project" value="UniProtKB"/>
</dbReference>
<dbReference type="GO" id="GO:0005886">
    <property type="term" value="C:plasma membrane"/>
    <property type="evidence" value="ECO:0000250"/>
    <property type="project" value="UniProtKB"/>
</dbReference>
<dbReference type="GO" id="GO:0035091">
    <property type="term" value="F:phosphatidylinositol binding"/>
    <property type="evidence" value="ECO:0000250"/>
    <property type="project" value="UniProtKB"/>
</dbReference>
<dbReference type="GO" id="GO:0005546">
    <property type="term" value="F:phosphatidylinositol-4,5-bisphosphate binding"/>
    <property type="evidence" value="ECO:0000250"/>
    <property type="project" value="UniProtKB"/>
</dbReference>
<dbReference type="GO" id="GO:0061817">
    <property type="term" value="P:endoplasmic reticulum-plasma membrane tethering"/>
    <property type="evidence" value="ECO:0000250"/>
    <property type="project" value="UniProtKB"/>
</dbReference>
<dbReference type="GO" id="GO:2001256">
    <property type="term" value="P:regulation of store-operated calcium entry"/>
    <property type="evidence" value="ECO:0000250"/>
    <property type="project" value="UniProtKB"/>
</dbReference>
<dbReference type="CDD" id="cd13220">
    <property type="entry name" value="PH-GRAM_GRAMDC"/>
    <property type="match status" value="1"/>
</dbReference>
<dbReference type="FunFam" id="2.30.29.30:FF:000086">
    <property type="entry name" value="GRAM domain-containing protein 2B isoform 2"/>
    <property type="match status" value="1"/>
</dbReference>
<dbReference type="Gene3D" id="2.30.29.30">
    <property type="entry name" value="Pleckstrin-homology domain (PH domain)/Phosphotyrosine-binding domain (PTB)"/>
    <property type="match status" value="1"/>
</dbReference>
<dbReference type="InterPro" id="IPR004182">
    <property type="entry name" value="GRAM"/>
</dbReference>
<dbReference type="InterPro" id="IPR011993">
    <property type="entry name" value="PH-like_dom_sf"/>
</dbReference>
<dbReference type="InterPro" id="IPR042624">
    <property type="entry name" value="RAMD2A"/>
</dbReference>
<dbReference type="PANTHER" id="PTHR46973">
    <property type="entry name" value="GRAM DOMAIN-CONTAINING PROTEIN 2A"/>
    <property type="match status" value="1"/>
</dbReference>
<dbReference type="PANTHER" id="PTHR46973:SF1">
    <property type="entry name" value="GRAM DOMAIN-CONTAINING PROTEIN 2A"/>
    <property type="match status" value="1"/>
</dbReference>
<dbReference type="Pfam" id="PF02893">
    <property type="entry name" value="GRAM"/>
    <property type="match status" value="1"/>
</dbReference>
<dbReference type="SMART" id="SM00568">
    <property type="entry name" value="GRAM"/>
    <property type="match status" value="1"/>
</dbReference>
<organism>
    <name type="scientific">Mus musculus</name>
    <name type="common">Mouse</name>
    <dbReference type="NCBI Taxonomy" id="10090"/>
    <lineage>
        <taxon>Eukaryota</taxon>
        <taxon>Metazoa</taxon>
        <taxon>Chordata</taxon>
        <taxon>Craniata</taxon>
        <taxon>Vertebrata</taxon>
        <taxon>Euteleostomi</taxon>
        <taxon>Mammalia</taxon>
        <taxon>Eutheria</taxon>
        <taxon>Euarchontoglires</taxon>
        <taxon>Glires</taxon>
        <taxon>Rodentia</taxon>
        <taxon>Myomorpha</taxon>
        <taxon>Muroidea</taxon>
        <taxon>Muridae</taxon>
        <taxon>Murinae</taxon>
        <taxon>Mus</taxon>
        <taxon>Mus</taxon>
    </lineage>
</organism>